<accession>B2JGU7</accession>
<protein>
    <recommendedName>
        <fullName evidence="1">D-aminoacyl-tRNA deacylase</fullName>
        <shortName evidence="1">DTD</shortName>
        <ecNumber evidence="1">3.1.1.96</ecNumber>
    </recommendedName>
    <alternativeName>
        <fullName evidence="1">Gly-tRNA(Ala) deacylase</fullName>
    </alternativeName>
</protein>
<sequence length="152" mass="16099">MIALIQRVRRAEVRVGDRVTGAIDAGLLALVCAERGDTDAVADKLLAKVLGYRVFSDAAGKMNLPVQNIDGAGRAGGLLLVSQFTLAADTNSGLRPSFTPAAPPDEGKRLFDYFVAAARAKHAIVETGEFGAEMQVSLVNDGPVTFWLQTRA</sequence>
<proteinExistence type="inferred from homology"/>
<name>DTD_PARP8</name>
<evidence type="ECO:0000255" key="1">
    <source>
        <dbReference type="HAMAP-Rule" id="MF_00518"/>
    </source>
</evidence>
<keyword id="KW-0963">Cytoplasm</keyword>
<keyword id="KW-0378">Hydrolase</keyword>
<keyword id="KW-1185">Reference proteome</keyword>
<keyword id="KW-0694">RNA-binding</keyword>
<keyword id="KW-0820">tRNA-binding</keyword>
<organism>
    <name type="scientific">Paraburkholderia phymatum (strain DSM 17167 / CIP 108236 / LMG 21445 / STM815)</name>
    <name type="common">Burkholderia phymatum</name>
    <dbReference type="NCBI Taxonomy" id="391038"/>
    <lineage>
        <taxon>Bacteria</taxon>
        <taxon>Pseudomonadati</taxon>
        <taxon>Pseudomonadota</taxon>
        <taxon>Betaproteobacteria</taxon>
        <taxon>Burkholderiales</taxon>
        <taxon>Burkholderiaceae</taxon>
        <taxon>Paraburkholderia</taxon>
    </lineage>
</organism>
<gene>
    <name evidence="1" type="primary">dtd</name>
    <name type="ordered locus">Bphy_2559</name>
</gene>
<reference key="1">
    <citation type="journal article" date="2014" name="Stand. Genomic Sci.">
        <title>Complete genome sequence of Burkholderia phymatum STM815(T), a broad host range and efficient nitrogen-fixing symbiont of Mimosa species.</title>
        <authorList>
            <person name="Moulin L."/>
            <person name="Klonowska A."/>
            <person name="Caroline B."/>
            <person name="Booth K."/>
            <person name="Vriezen J.A."/>
            <person name="Melkonian R."/>
            <person name="James E.K."/>
            <person name="Young J.P."/>
            <person name="Bena G."/>
            <person name="Hauser L."/>
            <person name="Land M."/>
            <person name="Kyrpides N."/>
            <person name="Bruce D."/>
            <person name="Chain P."/>
            <person name="Copeland A."/>
            <person name="Pitluck S."/>
            <person name="Woyke T."/>
            <person name="Lizotte-Waniewski M."/>
            <person name="Bristow J."/>
            <person name="Riley M."/>
        </authorList>
    </citation>
    <scope>NUCLEOTIDE SEQUENCE [LARGE SCALE GENOMIC DNA]</scope>
    <source>
        <strain>DSM 17167 / CIP 108236 / LMG 21445 / STM815</strain>
    </source>
</reference>
<feature type="chain" id="PRO_1000127501" description="D-aminoacyl-tRNA deacylase">
    <location>
        <begin position="1"/>
        <end position="152"/>
    </location>
</feature>
<feature type="short sequence motif" description="Gly-cisPro motif, important for rejection of L-amino acids" evidence="1">
    <location>
        <begin position="142"/>
        <end position="143"/>
    </location>
</feature>
<dbReference type="EC" id="3.1.1.96" evidence="1"/>
<dbReference type="EMBL" id="CP001043">
    <property type="protein sequence ID" value="ACC71731.1"/>
    <property type="molecule type" value="Genomic_DNA"/>
</dbReference>
<dbReference type="RefSeq" id="WP_012401934.1">
    <property type="nucleotide sequence ID" value="NC_010622.1"/>
</dbReference>
<dbReference type="SMR" id="B2JGU7"/>
<dbReference type="STRING" id="391038.Bphy_2559"/>
<dbReference type="KEGG" id="bph:Bphy_2559"/>
<dbReference type="eggNOG" id="COG1490">
    <property type="taxonomic scope" value="Bacteria"/>
</dbReference>
<dbReference type="HOGENOM" id="CLU_076901_1_1_4"/>
<dbReference type="OrthoDB" id="9801395at2"/>
<dbReference type="Proteomes" id="UP000001192">
    <property type="component" value="Chromosome 1"/>
</dbReference>
<dbReference type="GO" id="GO:0005737">
    <property type="term" value="C:cytoplasm"/>
    <property type="evidence" value="ECO:0007669"/>
    <property type="project" value="UniProtKB-SubCell"/>
</dbReference>
<dbReference type="GO" id="GO:0051500">
    <property type="term" value="F:D-tyrosyl-tRNA(Tyr) deacylase activity"/>
    <property type="evidence" value="ECO:0007669"/>
    <property type="project" value="TreeGrafter"/>
</dbReference>
<dbReference type="GO" id="GO:0106026">
    <property type="term" value="F:Gly-tRNA(Ala) deacylase activity"/>
    <property type="evidence" value="ECO:0007669"/>
    <property type="project" value="UniProtKB-UniRule"/>
</dbReference>
<dbReference type="GO" id="GO:0043908">
    <property type="term" value="F:Ser(Gly)-tRNA(Ala) hydrolase activity"/>
    <property type="evidence" value="ECO:0007669"/>
    <property type="project" value="UniProtKB-UniRule"/>
</dbReference>
<dbReference type="GO" id="GO:0000049">
    <property type="term" value="F:tRNA binding"/>
    <property type="evidence" value="ECO:0007669"/>
    <property type="project" value="UniProtKB-UniRule"/>
</dbReference>
<dbReference type="GO" id="GO:0019478">
    <property type="term" value="P:D-amino acid catabolic process"/>
    <property type="evidence" value="ECO:0007669"/>
    <property type="project" value="UniProtKB-UniRule"/>
</dbReference>
<dbReference type="CDD" id="cd00563">
    <property type="entry name" value="Dtyr_deacylase"/>
    <property type="match status" value="1"/>
</dbReference>
<dbReference type="FunFam" id="3.50.80.10:FF:000001">
    <property type="entry name" value="D-aminoacyl-tRNA deacylase"/>
    <property type="match status" value="1"/>
</dbReference>
<dbReference type="Gene3D" id="3.50.80.10">
    <property type="entry name" value="D-tyrosyl-tRNA(Tyr) deacylase"/>
    <property type="match status" value="1"/>
</dbReference>
<dbReference type="HAMAP" id="MF_00518">
    <property type="entry name" value="Deacylase_Dtd"/>
    <property type="match status" value="1"/>
</dbReference>
<dbReference type="InterPro" id="IPR003732">
    <property type="entry name" value="Daa-tRNA_deacyls_DTD"/>
</dbReference>
<dbReference type="InterPro" id="IPR023509">
    <property type="entry name" value="DTD-like_sf"/>
</dbReference>
<dbReference type="NCBIfam" id="TIGR00256">
    <property type="entry name" value="D-aminoacyl-tRNA deacylase"/>
    <property type="match status" value="1"/>
</dbReference>
<dbReference type="PANTHER" id="PTHR10472:SF5">
    <property type="entry name" value="D-AMINOACYL-TRNA DEACYLASE 1"/>
    <property type="match status" value="1"/>
</dbReference>
<dbReference type="PANTHER" id="PTHR10472">
    <property type="entry name" value="D-TYROSYL-TRNA TYR DEACYLASE"/>
    <property type="match status" value="1"/>
</dbReference>
<dbReference type="Pfam" id="PF02580">
    <property type="entry name" value="Tyr_Deacylase"/>
    <property type="match status" value="1"/>
</dbReference>
<dbReference type="SUPFAM" id="SSF69500">
    <property type="entry name" value="DTD-like"/>
    <property type="match status" value="1"/>
</dbReference>
<comment type="function">
    <text evidence="1">An aminoacyl-tRNA editing enzyme that deacylates mischarged D-aminoacyl-tRNAs. Also deacylates mischarged glycyl-tRNA(Ala), protecting cells against glycine mischarging by AlaRS. Acts via tRNA-based rather than protein-based catalysis; rejects L-amino acids rather than detecting D-amino acids in the active site. By recycling D-aminoacyl-tRNA to D-amino acids and free tRNA molecules, this enzyme counteracts the toxicity associated with the formation of D-aminoacyl-tRNA entities in vivo and helps enforce protein L-homochirality.</text>
</comment>
<comment type="catalytic activity">
    <reaction evidence="1">
        <text>glycyl-tRNA(Ala) + H2O = tRNA(Ala) + glycine + H(+)</text>
        <dbReference type="Rhea" id="RHEA:53744"/>
        <dbReference type="Rhea" id="RHEA-COMP:9657"/>
        <dbReference type="Rhea" id="RHEA-COMP:13640"/>
        <dbReference type="ChEBI" id="CHEBI:15377"/>
        <dbReference type="ChEBI" id="CHEBI:15378"/>
        <dbReference type="ChEBI" id="CHEBI:57305"/>
        <dbReference type="ChEBI" id="CHEBI:78442"/>
        <dbReference type="ChEBI" id="CHEBI:78522"/>
        <dbReference type="EC" id="3.1.1.96"/>
    </reaction>
</comment>
<comment type="catalytic activity">
    <reaction evidence="1">
        <text>a D-aminoacyl-tRNA + H2O = a tRNA + a D-alpha-amino acid + H(+)</text>
        <dbReference type="Rhea" id="RHEA:13953"/>
        <dbReference type="Rhea" id="RHEA-COMP:10123"/>
        <dbReference type="Rhea" id="RHEA-COMP:10124"/>
        <dbReference type="ChEBI" id="CHEBI:15377"/>
        <dbReference type="ChEBI" id="CHEBI:15378"/>
        <dbReference type="ChEBI" id="CHEBI:59871"/>
        <dbReference type="ChEBI" id="CHEBI:78442"/>
        <dbReference type="ChEBI" id="CHEBI:79333"/>
        <dbReference type="EC" id="3.1.1.96"/>
    </reaction>
</comment>
<comment type="subunit">
    <text evidence="1">Homodimer.</text>
</comment>
<comment type="subcellular location">
    <subcellularLocation>
        <location evidence="1">Cytoplasm</location>
    </subcellularLocation>
</comment>
<comment type="domain">
    <text evidence="1">A Gly-cisPro motif from one monomer fits into the active site of the other monomer to allow specific chiral rejection of L-amino acids.</text>
</comment>
<comment type="similarity">
    <text evidence="1">Belongs to the DTD family.</text>
</comment>